<sequence>MGVLNEFKAFAVKGNVVDMAVGIIIGAAFGKIVSSFVGDVIMPPLGLLIGGVDFSDLAITLKAAEGDVPAVVLAYGKFIQTVIDFVIVAFAIFMGVKAINKLKREEAVAPTTPPVPSAEETLLTEIRDLLKTQNQNRLP</sequence>
<feature type="chain" id="PRO_1000057759" description="Large-conductance mechanosensitive channel">
    <location>
        <begin position="1"/>
        <end position="139"/>
    </location>
</feature>
<feature type="transmembrane region" description="Helical" evidence="1">
    <location>
        <begin position="9"/>
        <end position="29"/>
    </location>
</feature>
<feature type="transmembrane region" description="Helical" evidence="1">
    <location>
        <begin position="79"/>
        <end position="99"/>
    </location>
</feature>
<reference key="1">
    <citation type="submission" date="2007-05" db="EMBL/GenBank/DDBJ databases">
        <title>Complete sequence of Pseudomonas putida F1.</title>
        <authorList>
            <consortium name="US DOE Joint Genome Institute"/>
            <person name="Copeland A."/>
            <person name="Lucas S."/>
            <person name="Lapidus A."/>
            <person name="Barry K."/>
            <person name="Detter J.C."/>
            <person name="Glavina del Rio T."/>
            <person name="Hammon N."/>
            <person name="Israni S."/>
            <person name="Dalin E."/>
            <person name="Tice H."/>
            <person name="Pitluck S."/>
            <person name="Chain P."/>
            <person name="Malfatti S."/>
            <person name="Shin M."/>
            <person name="Vergez L."/>
            <person name="Schmutz J."/>
            <person name="Larimer F."/>
            <person name="Land M."/>
            <person name="Hauser L."/>
            <person name="Kyrpides N."/>
            <person name="Lykidis A."/>
            <person name="Parales R."/>
            <person name="Richardson P."/>
        </authorList>
    </citation>
    <scope>NUCLEOTIDE SEQUENCE [LARGE SCALE GENOMIC DNA]</scope>
    <source>
        <strain>ATCC 700007 / DSM 6899 / JCM 31910 / BCRC 17059 / LMG 24140 / F1</strain>
    </source>
</reference>
<name>MSCL_PSEP1</name>
<proteinExistence type="inferred from homology"/>
<dbReference type="EMBL" id="CP000712">
    <property type="protein sequence ID" value="ABQ80627.1"/>
    <property type="molecule type" value="Genomic_DNA"/>
</dbReference>
<dbReference type="SMR" id="A5W917"/>
<dbReference type="KEGG" id="ppf:Pput_4507"/>
<dbReference type="eggNOG" id="COG1970">
    <property type="taxonomic scope" value="Bacteria"/>
</dbReference>
<dbReference type="HOGENOM" id="CLU_095787_0_0_6"/>
<dbReference type="GO" id="GO:0005886">
    <property type="term" value="C:plasma membrane"/>
    <property type="evidence" value="ECO:0007669"/>
    <property type="project" value="UniProtKB-SubCell"/>
</dbReference>
<dbReference type="GO" id="GO:0008381">
    <property type="term" value="F:mechanosensitive monoatomic ion channel activity"/>
    <property type="evidence" value="ECO:0007669"/>
    <property type="project" value="UniProtKB-UniRule"/>
</dbReference>
<dbReference type="FunFam" id="1.10.1200.120:FF:000001">
    <property type="entry name" value="Large-conductance mechanosensitive channel"/>
    <property type="match status" value="1"/>
</dbReference>
<dbReference type="Gene3D" id="1.10.1200.120">
    <property type="entry name" value="Large-conductance mechanosensitive channel, MscL, domain 1"/>
    <property type="match status" value="1"/>
</dbReference>
<dbReference type="HAMAP" id="MF_00115">
    <property type="entry name" value="MscL"/>
    <property type="match status" value="1"/>
</dbReference>
<dbReference type="InterPro" id="IPR019823">
    <property type="entry name" value="Mechanosensitive_channel_CS"/>
</dbReference>
<dbReference type="InterPro" id="IPR001185">
    <property type="entry name" value="MS_channel"/>
</dbReference>
<dbReference type="InterPro" id="IPR037673">
    <property type="entry name" value="MSC/AndL"/>
</dbReference>
<dbReference type="InterPro" id="IPR036019">
    <property type="entry name" value="MscL_channel"/>
</dbReference>
<dbReference type="NCBIfam" id="TIGR00220">
    <property type="entry name" value="mscL"/>
    <property type="match status" value="1"/>
</dbReference>
<dbReference type="NCBIfam" id="NF001843">
    <property type="entry name" value="PRK00567.1-4"/>
    <property type="match status" value="1"/>
</dbReference>
<dbReference type="PANTHER" id="PTHR30266:SF2">
    <property type="entry name" value="LARGE-CONDUCTANCE MECHANOSENSITIVE CHANNEL"/>
    <property type="match status" value="1"/>
</dbReference>
<dbReference type="PANTHER" id="PTHR30266">
    <property type="entry name" value="MECHANOSENSITIVE CHANNEL MSCL"/>
    <property type="match status" value="1"/>
</dbReference>
<dbReference type="Pfam" id="PF01741">
    <property type="entry name" value="MscL"/>
    <property type="match status" value="1"/>
</dbReference>
<dbReference type="PRINTS" id="PR01264">
    <property type="entry name" value="MECHCHANNEL"/>
</dbReference>
<dbReference type="SUPFAM" id="SSF81330">
    <property type="entry name" value="Gated mechanosensitive channel"/>
    <property type="match status" value="1"/>
</dbReference>
<dbReference type="PROSITE" id="PS01327">
    <property type="entry name" value="MSCL"/>
    <property type="match status" value="1"/>
</dbReference>
<accession>A5W917</accession>
<comment type="function">
    <text evidence="1">Channel that opens in response to stretch forces in the membrane lipid bilayer. May participate in the regulation of osmotic pressure changes within the cell.</text>
</comment>
<comment type="subunit">
    <text evidence="1">Homopentamer.</text>
</comment>
<comment type="subcellular location">
    <subcellularLocation>
        <location evidence="1">Cell inner membrane</location>
        <topology evidence="1">Multi-pass membrane protein</topology>
    </subcellularLocation>
</comment>
<comment type="similarity">
    <text evidence="1">Belongs to the MscL family.</text>
</comment>
<organism>
    <name type="scientific">Pseudomonas putida (strain ATCC 700007 / DSM 6899 / JCM 31910 / BCRC 17059 / LMG 24140 / F1)</name>
    <dbReference type="NCBI Taxonomy" id="351746"/>
    <lineage>
        <taxon>Bacteria</taxon>
        <taxon>Pseudomonadati</taxon>
        <taxon>Pseudomonadota</taxon>
        <taxon>Gammaproteobacteria</taxon>
        <taxon>Pseudomonadales</taxon>
        <taxon>Pseudomonadaceae</taxon>
        <taxon>Pseudomonas</taxon>
    </lineage>
</organism>
<evidence type="ECO:0000255" key="1">
    <source>
        <dbReference type="HAMAP-Rule" id="MF_00115"/>
    </source>
</evidence>
<gene>
    <name evidence="1" type="primary">mscL</name>
    <name type="ordered locus">Pput_4507</name>
</gene>
<keyword id="KW-0997">Cell inner membrane</keyword>
<keyword id="KW-1003">Cell membrane</keyword>
<keyword id="KW-0407">Ion channel</keyword>
<keyword id="KW-0406">Ion transport</keyword>
<keyword id="KW-0472">Membrane</keyword>
<keyword id="KW-0812">Transmembrane</keyword>
<keyword id="KW-1133">Transmembrane helix</keyword>
<keyword id="KW-0813">Transport</keyword>
<protein>
    <recommendedName>
        <fullName evidence="1">Large-conductance mechanosensitive channel</fullName>
    </recommendedName>
</protein>